<gene>
    <name evidence="1" type="primary">fabH</name>
    <name type="ordered locus">CLB_3684</name>
</gene>
<sequence length="326" mass="35813">MSNISVIGTGSYVPNNIITNDFLSTIVDTSDEWIRTRTGILERRISKGENTIYMATESAKEAIKNANIEANDLDLIIVATLTPDNFMPSTACSVQKEIGAMNALCFDISAACSGFIYGLEIACSMLKNSFRNKALIIGAENLSKIVDWEDRNTCVLFGDGAGSAILSKTKEEGILEFHSGSNGLKGEHLTCGVLKANNTPNKNDSLEKNNFIKMNGKEIFRFAVGAMNETIYNIQEKTKWDLNEVKYIISHQANSRIIEYTAKKLNTEKDKFYMNLDKYGNTSAASIPIALDEMNKRGLLNKQDKIILVGFGGGLTFGGVAIVWSI</sequence>
<proteinExistence type="inferred from homology"/>
<reference key="1">
    <citation type="journal article" date="2007" name="PLoS ONE">
        <title>Analysis of the neurotoxin complex genes in Clostridium botulinum A1-A4 and B1 strains: BoNT/A3, /Ba4 and /B1 clusters are located within plasmids.</title>
        <authorList>
            <person name="Smith T.J."/>
            <person name="Hill K.K."/>
            <person name="Foley B.T."/>
            <person name="Detter J.C."/>
            <person name="Munk A.C."/>
            <person name="Bruce D.C."/>
            <person name="Doggett N.A."/>
            <person name="Smith L.A."/>
            <person name="Marks J.D."/>
            <person name="Xie G."/>
            <person name="Brettin T.S."/>
        </authorList>
    </citation>
    <scope>NUCLEOTIDE SEQUENCE [LARGE SCALE GENOMIC DNA]</scope>
    <source>
        <strain>ATCC 19397 / Type A</strain>
    </source>
</reference>
<evidence type="ECO:0000255" key="1">
    <source>
        <dbReference type="HAMAP-Rule" id="MF_01815"/>
    </source>
</evidence>
<accession>A7FPM6</accession>
<comment type="function">
    <text evidence="1">Catalyzes the condensation reaction of fatty acid synthesis by the addition to an acyl acceptor of two carbons from malonyl-ACP. Catalyzes the first condensation reaction which initiates fatty acid synthesis and may therefore play a role in governing the total rate of fatty acid production. Possesses both acetoacetyl-ACP synthase and acetyl transacylase activities. Its substrate specificity determines the biosynthesis of branched-chain and/or straight-chain of fatty acids.</text>
</comment>
<comment type="catalytic activity">
    <reaction evidence="1">
        <text>malonyl-[ACP] + acetyl-CoA + H(+) = 3-oxobutanoyl-[ACP] + CO2 + CoA</text>
        <dbReference type="Rhea" id="RHEA:12080"/>
        <dbReference type="Rhea" id="RHEA-COMP:9623"/>
        <dbReference type="Rhea" id="RHEA-COMP:9625"/>
        <dbReference type="ChEBI" id="CHEBI:15378"/>
        <dbReference type="ChEBI" id="CHEBI:16526"/>
        <dbReference type="ChEBI" id="CHEBI:57287"/>
        <dbReference type="ChEBI" id="CHEBI:57288"/>
        <dbReference type="ChEBI" id="CHEBI:78449"/>
        <dbReference type="ChEBI" id="CHEBI:78450"/>
        <dbReference type="EC" id="2.3.1.180"/>
    </reaction>
</comment>
<comment type="pathway">
    <text evidence="1">Lipid metabolism; fatty acid biosynthesis.</text>
</comment>
<comment type="subunit">
    <text evidence="1">Homodimer.</text>
</comment>
<comment type="subcellular location">
    <subcellularLocation>
        <location evidence="1">Cytoplasm</location>
    </subcellularLocation>
</comment>
<comment type="domain">
    <text evidence="1">The last Arg residue of the ACP-binding site is essential for the weak association between ACP/AcpP and FabH.</text>
</comment>
<comment type="similarity">
    <text evidence="1">Belongs to the thiolase-like superfamily. FabH family.</text>
</comment>
<feature type="chain" id="PRO_1000056343" description="Beta-ketoacyl-[acyl-carrier-protein] synthase III">
    <location>
        <begin position="1"/>
        <end position="326"/>
    </location>
</feature>
<feature type="region of interest" description="ACP-binding" evidence="1">
    <location>
        <begin position="252"/>
        <end position="256"/>
    </location>
</feature>
<feature type="active site" evidence="1">
    <location>
        <position position="112"/>
    </location>
</feature>
<feature type="active site" evidence="1">
    <location>
        <position position="251"/>
    </location>
</feature>
<feature type="active site" evidence="1">
    <location>
        <position position="281"/>
    </location>
</feature>
<name>FABH_CLOB1</name>
<protein>
    <recommendedName>
        <fullName evidence="1">Beta-ketoacyl-[acyl-carrier-protein] synthase III</fullName>
        <shortName evidence="1">Beta-ketoacyl-ACP synthase III</shortName>
        <shortName evidence="1">KAS III</shortName>
        <ecNumber evidence="1">2.3.1.180</ecNumber>
    </recommendedName>
    <alternativeName>
        <fullName evidence="1">3-oxoacyl-[acyl-carrier-protein] synthase 3</fullName>
    </alternativeName>
    <alternativeName>
        <fullName evidence="1">3-oxoacyl-[acyl-carrier-protein] synthase III</fullName>
    </alternativeName>
</protein>
<dbReference type="EC" id="2.3.1.180" evidence="1"/>
<dbReference type="EMBL" id="CP000726">
    <property type="protein sequence ID" value="ABS33769.1"/>
    <property type="molecule type" value="Genomic_DNA"/>
</dbReference>
<dbReference type="RefSeq" id="WP_012048430.1">
    <property type="nucleotide sequence ID" value="NC_009697.1"/>
</dbReference>
<dbReference type="SMR" id="A7FPM6"/>
<dbReference type="KEGG" id="cba:CLB_3684"/>
<dbReference type="HOGENOM" id="CLU_039592_3_1_9"/>
<dbReference type="UniPathway" id="UPA00094"/>
<dbReference type="GO" id="GO:0005737">
    <property type="term" value="C:cytoplasm"/>
    <property type="evidence" value="ECO:0007669"/>
    <property type="project" value="UniProtKB-SubCell"/>
</dbReference>
<dbReference type="GO" id="GO:0004315">
    <property type="term" value="F:3-oxoacyl-[acyl-carrier-protein] synthase activity"/>
    <property type="evidence" value="ECO:0007669"/>
    <property type="project" value="InterPro"/>
</dbReference>
<dbReference type="GO" id="GO:0033818">
    <property type="term" value="F:beta-ketoacyl-acyl-carrier-protein synthase III activity"/>
    <property type="evidence" value="ECO:0007669"/>
    <property type="project" value="UniProtKB-UniRule"/>
</dbReference>
<dbReference type="GO" id="GO:0006633">
    <property type="term" value="P:fatty acid biosynthetic process"/>
    <property type="evidence" value="ECO:0007669"/>
    <property type="project" value="UniProtKB-UniRule"/>
</dbReference>
<dbReference type="GO" id="GO:0044550">
    <property type="term" value="P:secondary metabolite biosynthetic process"/>
    <property type="evidence" value="ECO:0007669"/>
    <property type="project" value="TreeGrafter"/>
</dbReference>
<dbReference type="CDD" id="cd00830">
    <property type="entry name" value="KAS_III"/>
    <property type="match status" value="1"/>
</dbReference>
<dbReference type="FunFam" id="3.40.47.10:FF:000004">
    <property type="entry name" value="3-oxoacyl-[acyl-carrier-protein] synthase 3"/>
    <property type="match status" value="1"/>
</dbReference>
<dbReference type="Gene3D" id="3.40.47.10">
    <property type="match status" value="1"/>
</dbReference>
<dbReference type="HAMAP" id="MF_01815">
    <property type="entry name" value="FabH"/>
    <property type="match status" value="1"/>
</dbReference>
<dbReference type="InterPro" id="IPR013747">
    <property type="entry name" value="ACP_syn_III_C"/>
</dbReference>
<dbReference type="InterPro" id="IPR013751">
    <property type="entry name" value="ACP_syn_III_N"/>
</dbReference>
<dbReference type="InterPro" id="IPR004655">
    <property type="entry name" value="FabH"/>
</dbReference>
<dbReference type="InterPro" id="IPR016039">
    <property type="entry name" value="Thiolase-like"/>
</dbReference>
<dbReference type="NCBIfam" id="TIGR00747">
    <property type="entry name" value="fabH"/>
    <property type="match status" value="1"/>
</dbReference>
<dbReference type="NCBIfam" id="NF006829">
    <property type="entry name" value="PRK09352.1"/>
    <property type="match status" value="1"/>
</dbReference>
<dbReference type="PANTHER" id="PTHR34069">
    <property type="entry name" value="3-OXOACYL-[ACYL-CARRIER-PROTEIN] SYNTHASE 3"/>
    <property type="match status" value="1"/>
</dbReference>
<dbReference type="PANTHER" id="PTHR34069:SF2">
    <property type="entry name" value="BETA-KETOACYL-[ACYL-CARRIER-PROTEIN] SYNTHASE III"/>
    <property type="match status" value="1"/>
</dbReference>
<dbReference type="Pfam" id="PF08545">
    <property type="entry name" value="ACP_syn_III"/>
    <property type="match status" value="1"/>
</dbReference>
<dbReference type="Pfam" id="PF08541">
    <property type="entry name" value="ACP_syn_III_C"/>
    <property type="match status" value="1"/>
</dbReference>
<dbReference type="SUPFAM" id="SSF53901">
    <property type="entry name" value="Thiolase-like"/>
    <property type="match status" value="1"/>
</dbReference>
<keyword id="KW-0012">Acyltransferase</keyword>
<keyword id="KW-0963">Cytoplasm</keyword>
<keyword id="KW-0275">Fatty acid biosynthesis</keyword>
<keyword id="KW-0276">Fatty acid metabolism</keyword>
<keyword id="KW-0444">Lipid biosynthesis</keyword>
<keyword id="KW-0443">Lipid metabolism</keyword>
<keyword id="KW-0511">Multifunctional enzyme</keyword>
<keyword id="KW-0808">Transferase</keyword>
<organism>
    <name type="scientific">Clostridium botulinum (strain ATCC 19397 / Type A)</name>
    <dbReference type="NCBI Taxonomy" id="441770"/>
    <lineage>
        <taxon>Bacteria</taxon>
        <taxon>Bacillati</taxon>
        <taxon>Bacillota</taxon>
        <taxon>Clostridia</taxon>
        <taxon>Eubacteriales</taxon>
        <taxon>Clostridiaceae</taxon>
        <taxon>Clostridium</taxon>
    </lineage>
</organism>